<name>VATL2_EREGS</name>
<keyword id="KW-0375">Hydrogen ion transport</keyword>
<keyword id="KW-0406">Ion transport</keyword>
<keyword id="KW-0472">Membrane</keyword>
<keyword id="KW-1185">Reference proteome</keyword>
<keyword id="KW-0812">Transmembrane</keyword>
<keyword id="KW-1133">Transmembrane helix</keyword>
<keyword id="KW-0813">Transport</keyword>
<keyword id="KW-0926">Vacuole</keyword>
<proteinExistence type="inferred from homology"/>
<reference key="1">
    <citation type="journal article" date="2004" name="Science">
        <title>The Ashbya gossypii genome as a tool for mapping the ancient Saccharomyces cerevisiae genome.</title>
        <authorList>
            <person name="Dietrich F.S."/>
            <person name="Voegeli S."/>
            <person name="Brachat S."/>
            <person name="Lerch A."/>
            <person name="Gates K."/>
            <person name="Steiner S."/>
            <person name="Mohr C."/>
            <person name="Poehlmann R."/>
            <person name="Luedi P."/>
            <person name="Choi S."/>
            <person name="Wing R.A."/>
            <person name="Flavier A."/>
            <person name="Gaffney T.D."/>
            <person name="Philippsen P."/>
        </authorList>
    </citation>
    <scope>NUCLEOTIDE SEQUENCE [LARGE SCALE GENOMIC DNA]</scope>
    <source>
        <strain>ATCC 10895 / CBS 109.51 / FGSC 9923 / NRRL Y-1056</strain>
    </source>
</reference>
<reference key="2">
    <citation type="journal article" date="2013" name="G3 (Bethesda)">
        <title>Genomes of Ashbya fungi isolated from insects reveal four mating-type loci, numerous translocations, lack of transposons, and distinct gene duplications.</title>
        <authorList>
            <person name="Dietrich F.S."/>
            <person name="Voegeli S."/>
            <person name="Kuo S."/>
            <person name="Philippsen P."/>
        </authorList>
    </citation>
    <scope>GENOME REANNOTATION</scope>
    <source>
        <strain>ATCC 10895 / CBS 109.51 / FGSC 9923 / NRRL Y-1056</strain>
    </source>
</reference>
<feature type="chain" id="PRO_0000071782" description="V-type proton ATPase subunit c'">
    <location>
        <begin position="1"/>
        <end position="164"/>
    </location>
</feature>
<feature type="topological domain" description="Lumenal" evidence="2">
    <location>
        <begin position="1"/>
        <end position="15"/>
    </location>
</feature>
<feature type="transmembrane region" description="Helical" evidence="2">
    <location>
        <begin position="16"/>
        <end position="36"/>
    </location>
</feature>
<feature type="topological domain" description="Cytoplasmic" evidence="2">
    <location>
        <begin position="37"/>
        <end position="58"/>
    </location>
</feature>
<feature type="transmembrane region" description="Helical" evidence="2">
    <location>
        <begin position="59"/>
        <end position="79"/>
    </location>
</feature>
<feature type="topological domain" description="Lumenal" evidence="2">
    <location>
        <begin position="80"/>
        <end position="97"/>
    </location>
</feature>
<feature type="transmembrane region" description="Helical" evidence="2">
    <location>
        <begin position="98"/>
        <end position="118"/>
    </location>
</feature>
<feature type="topological domain" description="Cytoplasmic" evidence="2">
    <location>
        <begin position="119"/>
        <end position="135"/>
    </location>
</feature>
<feature type="transmembrane region" description="Helical" evidence="2">
    <location>
        <begin position="136"/>
        <end position="156"/>
    </location>
</feature>
<feature type="topological domain" description="Lumenal" evidence="2">
    <location>
        <begin position="157"/>
        <end position="164"/>
    </location>
</feature>
<feature type="site" description="Essential for proton translocation" evidence="1">
    <location>
        <position position="144"/>
    </location>
</feature>
<comment type="function">
    <text evidence="1">Proton-conducting pore forming subunit of the V0 complex of vacuolar(H+)-ATPase (V-ATPase), a multisubunit enzyme composed of a peripheral complex (V1) that hydrolyzes ATP and a membrane integral complex (V0) that translocates protons (By similarity). V-ATPase is responsible for acidifying and maintaining the pH of intracellular compartments (By similarity).</text>
</comment>
<comment type="subunit">
    <text evidence="1">V-ATPase is a heteromultimeric enzyme composed of a peripheral catalytic V1 complex (components A to H) attached to an integral membrane V0 proton pore complex (components: a, c, c', c'', d, e, f and VOA1) (By similarity). The decameric c-ring forms the proton-conducting pore, and is composed of eight proteolipid subunits c, one subunit c' and one subunit c'' (By similarity).</text>
</comment>
<comment type="subcellular location">
    <subcellularLocation>
        <location evidence="1">Vacuole membrane</location>
        <topology evidence="2">Multi-pass membrane protein</topology>
    </subcellularLocation>
</comment>
<comment type="similarity">
    <text evidence="3">Belongs to the V-ATPase proteolipid subunit family.</text>
</comment>
<organism>
    <name type="scientific">Eremothecium gossypii (strain ATCC 10895 / CBS 109.51 / FGSC 9923 / NRRL Y-1056)</name>
    <name type="common">Yeast</name>
    <name type="synonym">Ashbya gossypii</name>
    <dbReference type="NCBI Taxonomy" id="284811"/>
    <lineage>
        <taxon>Eukaryota</taxon>
        <taxon>Fungi</taxon>
        <taxon>Dikarya</taxon>
        <taxon>Ascomycota</taxon>
        <taxon>Saccharomycotina</taxon>
        <taxon>Saccharomycetes</taxon>
        <taxon>Saccharomycetales</taxon>
        <taxon>Saccharomycetaceae</taxon>
        <taxon>Eremothecium</taxon>
    </lineage>
</organism>
<protein>
    <recommendedName>
        <fullName evidence="1">V-type proton ATPase subunit c'</fullName>
        <shortName evidence="1">V-ATPase subunit c'</shortName>
    </recommendedName>
    <alternativeName>
        <fullName>Proteolipid protein VMA11</fullName>
    </alternativeName>
    <alternativeName>
        <fullName>V-type proton ATPase 16 kDa proteolipid subunit 2</fullName>
        <shortName>V-ATPase 16 kDa proteolipid subunit 2</shortName>
    </alternativeName>
    <alternativeName>
        <fullName>Vacuolar proton pump 16 kDa proteolipid subunit 2</fullName>
    </alternativeName>
    <alternativeName>
        <fullName evidence="1">Vacuolar proton pump c' subunit</fullName>
    </alternativeName>
</protein>
<evidence type="ECO:0000250" key="1">
    <source>
        <dbReference type="UniProtKB" id="P32842"/>
    </source>
</evidence>
<evidence type="ECO:0000255" key="2"/>
<evidence type="ECO:0000305" key="3"/>
<accession>Q755G4</accession>
<sequence>MTDDLVNEYAPAFAPFFGFAGCAAAMILSSLGAAIGTAKSGIGISGIGTFRPELIMKSLIPVVMSGILAVYGLVVAVLVAGGLSPTEEYTLFNGFMHLAAGLCVGFACLSSGYAIGIVGDVGVRKFMHQPRLFVGIVLILIFAEVLGLYGMIIALILNTRGSGN</sequence>
<gene>
    <name type="primary">VMA11</name>
    <name type="ordered locus">AFL141C</name>
</gene>
<dbReference type="EMBL" id="AE016819">
    <property type="protein sequence ID" value="AAS53233.1"/>
    <property type="molecule type" value="Genomic_DNA"/>
</dbReference>
<dbReference type="RefSeq" id="NP_985409.1">
    <property type="nucleotide sequence ID" value="NM_210763.1"/>
</dbReference>
<dbReference type="SMR" id="Q755G4"/>
<dbReference type="FunCoup" id="Q755G4">
    <property type="interactions" value="165"/>
</dbReference>
<dbReference type="STRING" id="284811.Q755G4"/>
<dbReference type="EnsemblFungi" id="AAS53233">
    <property type="protein sequence ID" value="AAS53233"/>
    <property type="gene ID" value="AGOS_AFL141C"/>
</dbReference>
<dbReference type="GeneID" id="4621635"/>
<dbReference type="KEGG" id="ago:AGOS_AFL141C"/>
<dbReference type="eggNOG" id="KOG0232">
    <property type="taxonomic scope" value="Eukaryota"/>
</dbReference>
<dbReference type="HOGENOM" id="CLU_085752_1_1_1"/>
<dbReference type="InParanoid" id="Q755G4"/>
<dbReference type="OMA" id="MSVCPPY"/>
<dbReference type="OrthoDB" id="1744869at2759"/>
<dbReference type="Proteomes" id="UP000000591">
    <property type="component" value="Chromosome VI"/>
</dbReference>
<dbReference type="GO" id="GO:0000324">
    <property type="term" value="C:fungal-type vacuole"/>
    <property type="evidence" value="ECO:0007669"/>
    <property type="project" value="EnsemblFungi"/>
</dbReference>
<dbReference type="GO" id="GO:0016020">
    <property type="term" value="C:membrane"/>
    <property type="evidence" value="ECO:0000318"/>
    <property type="project" value="GO_Central"/>
</dbReference>
<dbReference type="GO" id="GO:0000220">
    <property type="term" value="C:vacuolar proton-transporting V-type ATPase, V0 domain"/>
    <property type="evidence" value="ECO:0007669"/>
    <property type="project" value="EnsemblFungi"/>
</dbReference>
<dbReference type="GO" id="GO:0046961">
    <property type="term" value="F:proton-transporting ATPase activity, rotational mechanism"/>
    <property type="evidence" value="ECO:0007669"/>
    <property type="project" value="InterPro"/>
</dbReference>
<dbReference type="CDD" id="cd18175">
    <property type="entry name" value="ATP-synt_Vo_c_ATP6C_rpt1"/>
    <property type="match status" value="1"/>
</dbReference>
<dbReference type="CDD" id="cd18176">
    <property type="entry name" value="ATP-synt_Vo_c_ATP6C_rpt2"/>
    <property type="match status" value="1"/>
</dbReference>
<dbReference type="FunFam" id="1.20.120.610:FF:000003">
    <property type="entry name" value="V-type proton ATPase proteolipid subunit"/>
    <property type="match status" value="1"/>
</dbReference>
<dbReference type="Gene3D" id="1.20.120.610">
    <property type="entry name" value="lithium bound rotor ring of v- atpase"/>
    <property type="match status" value="1"/>
</dbReference>
<dbReference type="InterPro" id="IPR002379">
    <property type="entry name" value="ATPase_proteolipid_c-like_dom"/>
</dbReference>
<dbReference type="InterPro" id="IPR000245">
    <property type="entry name" value="ATPase_proteolipid_csu"/>
</dbReference>
<dbReference type="InterPro" id="IPR011555">
    <property type="entry name" value="ATPase_proteolipid_su_C_euk"/>
</dbReference>
<dbReference type="InterPro" id="IPR035921">
    <property type="entry name" value="F/V-ATP_Csub_sf"/>
</dbReference>
<dbReference type="NCBIfam" id="TIGR01100">
    <property type="entry name" value="V_ATP_synt_C"/>
    <property type="match status" value="1"/>
</dbReference>
<dbReference type="PANTHER" id="PTHR10263">
    <property type="entry name" value="V-TYPE PROTON ATPASE PROTEOLIPID SUBUNIT"/>
    <property type="match status" value="1"/>
</dbReference>
<dbReference type="Pfam" id="PF00137">
    <property type="entry name" value="ATP-synt_C"/>
    <property type="match status" value="2"/>
</dbReference>
<dbReference type="PRINTS" id="PR00122">
    <property type="entry name" value="VACATPASE"/>
</dbReference>
<dbReference type="SUPFAM" id="SSF81333">
    <property type="entry name" value="F1F0 ATP synthase subunit C"/>
    <property type="match status" value="1"/>
</dbReference>